<proteinExistence type="predicted"/>
<protein>
    <recommendedName>
        <fullName>Uncharacterized protein ORF78</fullName>
    </recommendedName>
</protein>
<gene>
    <name type="ORF">ORF78</name>
</gene>
<organism>
    <name type="scientific">Ostreid herpesvirus 1 (isolate France)</name>
    <name type="common">OsHV-1</name>
    <name type="synonym">Pacific oyster herpesvirus</name>
    <dbReference type="NCBI Taxonomy" id="654903"/>
    <lineage>
        <taxon>Viruses</taxon>
        <taxon>Duplodnaviria</taxon>
        <taxon>Heunggongvirae</taxon>
        <taxon>Peploviricota</taxon>
        <taxon>Herviviricetes</taxon>
        <taxon>Herpesvirales</taxon>
        <taxon>Malacoherpesviridae</taxon>
        <taxon>Ostreavirus</taxon>
        <taxon>Ostreavirus ostreidmalaco1</taxon>
        <taxon>Ostreid herpesvirus 1</taxon>
    </lineage>
</organism>
<organismHost>
    <name type="scientific">Magallana gigas</name>
    <name type="common">Pacific oyster</name>
    <name type="synonym">Crassostrea gigas</name>
    <dbReference type="NCBI Taxonomy" id="29159"/>
</organismHost>
<organismHost>
    <name type="scientific">Pecten maximus</name>
    <name type="common">King scallop</name>
    <name type="synonym">Pilgrim's clam</name>
    <dbReference type="NCBI Taxonomy" id="6579"/>
</organismHost>
<evidence type="ECO:0000256" key="1">
    <source>
        <dbReference type="SAM" id="MobiDB-lite"/>
    </source>
</evidence>
<name>Y078_OSHVF</name>
<reference key="1">
    <citation type="journal article" date="2005" name="J. Gen. Virol.">
        <title>A novel class of herpesvirus with bivalve hosts.</title>
        <authorList>
            <person name="Davison A.J."/>
            <person name="Trus B.L."/>
            <person name="Cheng N."/>
            <person name="Steven A.C."/>
            <person name="Watson M.S."/>
            <person name="Cunningham C."/>
            <person name="Le Deuff R.M."/>
            <person name="Renault T."/>
        </authorList>
    </citation>
    <scope>NUCLEOTIDE SEQUENCE [LARGE SCALE GENOMIC DNA]</scope>
</reference>
<sequence>MSTDVVFDPKRVDKKHNNGLNLPDSLIKRWWSSDVTAVNNSYKNNNVNYNREYPLPDIFRSDPRKYKDVFPLQSHWIMQRYVTKVNEGIYKFLNYFDMKSSTFAPGFNKKEKTNYIHRIAKDLAAKANKEEIRNYSRDLINTLINMDGYDKLSPYLNFLIAILSDFINKTPLTIPTDKEWSRPGFNRIMNPGLVKMQNTYDCIKVFAWAHNYEEPKILFDYLGNRVACLTIIAKDPSASTAAENVFISSEIYSVDRYIWAAAPFNTKSSADWLTNTMYGDLTEEITYRFSPCFGGHCISAEEILTRKKVIDLYVNGEYKTIITGEGHPFGTVFDSMGMLRDPTFNGPLKDLPFTFKSIVDGFLHYGLKQKVTGIMVNMPKDDKWDIDRIRDVLLWMFEITTYRDKTITNFFVDQYVDRDDICCVPFQVAIGSNFSEDRKDNNSLVRQPYFMDPKFIKKYETGREDGTTRYNLKFKIEEDDEEDNILSINQEKITVDFSFFYNKLMDGGFMNKMDLCEIIFRTYAKKSPHVYGYFLLRGKAIKTRSDMINLFNGELRFENNSDDIIIGKKIYENGVDQLAEIFKEYNLNTSENMAGRFKQDPERRYITVNKFVKGDRSDSGGGPPPPPPPDEEEYEDIADEEITITPDVTEPVIANERAAITVVQSDIPEIPIEELITEEEEEEEPTPPPPVQTVATVDQPMVEIVPGQNLVPVGESPMSAPDIDLPIPGLPGPQPQIMEVTSGGPIIEEIESPPILPIQPPLPLPAPPTPQEPPKSILQPPKLIVEPKEVVVPTPPVIEQPKTPEEVPKQIVPPSPAVVSPPSPTTIPQEPPTQPSPIPSQPPVNIIPTQVPPRPGIGERPYPFFEPITPDTPAITPPKLVIKKPADEVIVEEPEEEEKPFVIIDEDEKMGEVEVGQGFPEPFSDRLTVDDLPLEDPRFKSEDVDDIMVAIDSQLEELGEGVGGDGDGGAFIIDPTLPPEVFIDIVDKTINVIEKRVATKRKISDDEEAESESARTRTWVRTTPKDFSGLTAATRGPRINITPKKKRKIVVTTEEEEKLLKEPVTESVEDLPSYEEVKLLDESDNEDDELDITSTPEDMETLKQSRAAPIRARRRGVVMDEESPIKPGSQPVDTSDATKISTDTDELTQQE</sequence>
<dbReference type="EMBL" id="AY509253">
    <property type="protein sequence ID" value="AAS00964.1"/>
    <property type="molecule type" value="Genomic_DNA"/>
</dbReference>
<dbReference type="RefSeq" id="YP_024617.1">
    <property type="nucleotide sequence ID" value="NC_005881.2"/>
</dbReference>
<dbReference type="KEGG" id="vg:2948248"/>
<dbReference type="Proteomes" id="UP000007021">
    <property type="component" value="Segment"/>
</dbReference>
<accession>Q6R7F1</accession>
<feature type="chain" id="PRO_0000385099" description="Uncharacterized protein ORF78">
    <location>
        <begin position="1"/>
        <end position="1151"/>
    </location>
</feature>
<feature type="region of interest" description="Disordered" evidence="1">
    <location>
        <begin position="611"/>
        <end position="633"/>
    </location>
</feature>
<feature type="region of interest" description="Disordered" evidence="1">
    <location>
        <begin position="709"/>
        <end position="740"/>
    </location>
</feature>
<feature type="region of interest" description="Disordered" evidence="1">
    <location>
        <begin position="753"/>
        <end position="778"/>
    </location>
</feature>
<feature type="region of interest" description="Disordered" evidence="1">
    <location>
        <begin position="795"/>
        <end position="880"/>
    </location>
</feature>
<feature type="region of interest" description="Disordered" evidence="1">
    <location>
        <begin position="1060"/>
        <end position="1151"/>
    </location>
</feature>
<feature type="compositionally biased region" description="Pro residues" evidence="1">
    <location>
        <begin position="754"/>
        <end position="773"/>
    </location>
</feature>
<feature type="compositionally biased region" description="Pro residues" evidence="1">
    <location>
        <begin position="811"/>
        <end position="842"/>
    </location>
</feature>
<feature type="compositionally biased region" description="Low complexity" evidence="1">
    <location>
        <begin position="867"/>
        <end position="878"/>
    </location>
</feature>
<feature type="compositionally biased region" description="Acidic residues" evidence="1">
    <location>
        <begin position="1082"/>
        <end position="1091"/>
    </location>
</feature>
<feature type="compositionally biased region" description="Polar residues" evidence="1">
    <location>
        <begin position="1131"/>
        <end position="1142"/>
    </location>
</feature>
<keyword id="KW-1185">Reference proteome</keyword>